<feature type="chain" id="PRO_0000229858" description="Histidinol dehydrogenase">
    <location>
        <begin position="1"/>
        <end position="424"/>
    </location>
</feature>
<feature type="active site" description="Proton acceptor" evidence="1">
    <location>
        <position position="322"/>
    </location>
</feature>
<feature type="active site" description="Proton acceptor" evidence="1">
    <location>
        <position position="323"/>
    </location>
</feature>
<feature type="binding site" evidence="1">
    <location>
        <position position="124"/>
    </location>
    <ligand>
        <name>NAD(+)</name>
        <dbReference type="ChEBI" id="CHEBI:57540"/>
    </ligand>
</feature>
<feature type="binding site" evidence="1">
    <location>
        <position position="186"/>
    </location>
    <ligand>
        <name>NAD(+)</name>
        <dbReference type="ChEBI" id="CHEBI:57540"/>
    </ligand>
</feature>
<feature type="binding site" evidence="1">
    <location>
        <position position="209"/>
    </location>
    <ligand>
        <name>NAD(+)</name>
        <dbReference type="ChEBI" id="CHEBI:57540"/>
    </ligand>
</feature>
<feature type="binding site" evidence="1">
    <location>
        <position position="232"/>
    </location>
    <ligand>
        <name>substrate</name>
    </ligand>
</feature>
<feature type="binding site" evidence="1">
    <location>
        <position position="254"/>
    </location>
    <ligand>
        <name>substrate</name>
    </ligand>
</feature>
<feature type="binding site" evidence="1">
    <location>
        <position position="254"/>
    </location>
    <ligand>
        <name>Zn(2+)</name>
        <dbReference type="ChEBI" id="CHEBI:29105"/>
    </ligand>
</feature>
<feature type="binding site" evidence="1">
    <location>
        <position position="257"/>
    </location>
    <ligand>
        <name>substrate</name>
    </ligand>
</feature>
<feature type="binding site" evidence="1">
    <location>
        <position position="257"/>
    </location>
    <ligand>
        <name>Zn(2+)</name>
        <dbReference type="ChEBI" id="CHEBI:29105"/>
    </ligand>
</feature>
<feature type="binding site" evidence="1">
    <location>
        <position position="323"/>
    </location>
    <ligand>
        <name>substrate</name>
    </ligand>
</feature>
<feature type="binding site" evidence="1">
    <location>
        <position position="356"/>
    </location>
    <ligand>
        <name>substrate</name>
    </ligand>
</feature>
<feature type="binding site" evidence="1">
    <location>
        <position position="356"/>
    </location>
    <ligand>
        <name>Zn(2+)</name>
        <dbReference type="ChEBI" id="CHEBI:29105"/>
    </ligand>
</feature>
<feature type="binding site" evidence="1">
    <location>
        <position position="410"/>
    </location>
    <ligand>
        <name>substrate</name>
    </ligand>
</feature>
<feature type="binding site" evidence="1">
    <location>
        <position position="415"/>
    </location>
    <ligand>
        <name>substrate</name>
    </ligand>
</feature>
<feature type="binding site" evidence="1">
    <location>
        <position position="415"/>
    </location>
    <ligand>
        <name>Zn(2+)</name>
        <dbReference type="ChEBI" id="CHEBI:29105"/>
    </ligand>
</feature>
<accession>Q2RGV8</accession>
<gene>
    <name evidence="1" type="primary">hisD</name>
    <name type="ordered locus">Moth_2035</name>
</gene>
<proteinExistence type="inferred from homology"/>
<sequence>MLPLIDGKEVKRRWSGRLLAREGVAARVREIIAAVKREGQAAVERYTLELDGVDLKEAGFRVTREEIGAAYRAVSPDLLEALRIARDNIATYHRRQPRGSWMETAADGTILGQICRPLGRVGLYVPGGTAAYPSSVLMTAVPARVAGVREIALATPPRRDGTLPPLLLVAAAEAGVEEIYKMGGAQAVAALAYGTEKVAPVDKIAGPGNIYVTLAKKEVYGQVDIDMLAGPSEIVVIADGKARPDWVAADLLSQAEHDALAGAVLITPDAGLARAVGEEVTRQLEALPRREIASRSLADYGAAVVVTGLDAAMDLANSLAPEHLELYVSEPWSWLGRVENAGAIFLGPYSSEPLGDYLAGPSHVLPTGGTARFYSPLSVDTFLKKSSLIACNRAGFRAAAGYIQALARAEGLEGHARAIELREE</sequence>
<dbReference type="EC" id="1.1.1.23" evidence="1"/>
<dbReference type="EMBL" id="CP000232">
    <property type="protein sequence ID" value="ABC20331.1"/>
    <property type="molecule type" value="Genomic_DNA"/>
</dbReference>
<dbReference type="RefSeq" id="YP_430874.1">
    <property type="nucleotide sequence ID" value="NC_007644.1"/>
</dbReference>
<dbReference type="SMR" id="Q2RGV8"/>
<dbReference type="STRING" id="264732.Moth_2035"/>
<dbReference type="EnsemblBacteria" id="ABC20331">
    <property type="protein sequence ID" value="ABC20331"/>
    <property type="gene ID" value="Moth_2035"/>
</dbReference>
<dbReference type="KEGG" id="mta:Moth_2035"/>
<dbReference type="PATRIC" id="fig|264732.11.peg.2210"/>
<dbReference type="eggNOG" id="COG0141">
    <property type="taxonomic scope" value="Bacteria"/>
</dbReference>
<dbReference type="HOGENOM" id="CLU_006732_3_3_9"/>
<dbReference type="OrthoDB" id="9805269at2"/>
<dbReference type="UniPathway" id="UPA00031">
    <property type="reaction ID" value="UER00014"/>
</dbReference>
<dbReference type="GO" id="GO:0005829">
    <property type="term" value="C:cytosol"/>
    <property type="evidence" value="ECO:0007669"/>
    <property type="project" value="TreeGrafter"/>
</dbReference>
<dbReference type="GO" id="GO:0004399">
    <property type="term" value="F:histidinol dehydrogenase activity"/>
    <property type="evidence" value="ECO:0007669"/>
    <property type="project" value="UniProtKB-UniRule"/>
</dbReference>
<dbReference type="GO" id="GO:0051287">
    <property type="term" value="F:NAD binding"/>
    <property type="evidence" value="ECO:0007669"/>
    <property type="project" value="InterPro"/>
</dbReference>
<dbReference type="GO" id="GO:0008270">
    <property type="term" value="F:zinc ion binding"/>
    <property type="evidence" value="ECO:0007669"/>
    <property type="project" value="UniProtKB-UniRule"/>
</dbReference>
<dbReference type="GO" id="GO:0000105">
    <property type="term" value="P:L-histidine biosynthetic process"/>
    <property type="evidence" value="ECO:0007669"/>
    <property type="project" value="UniProtKB-UniRule"/>
</dbReference>
<dbReference type="CDD" id="cd06572">
    <property type="entry name" value="Histidinol_dh"/>
    <property type="match status" value="1"/>
</dbReference>
<dbReference type="FunFam" id="3.40.50.1980:FF:000001">
    <property type="entry name" value="Histidinol dehydrogenase"/>
    <property type="match status" value="1"/>
</dbReference>
<dbReference type="FunFam" id="3.40.50.1980:FF:000026">
    <property type="entry name" value="Histidinol dehydrogenase"/>
    <property type="match status" value="1"/>
</dbReference>
<dbReference type="Gene3D" id="1.20.5.1300">
    <property type="match status" value="1"/>
</dbReference>
<dbReference type="Gene3D" id="3.40.50.1980">
    <property type="entry name" value="Nitrogenase molybdenum iron protein domain"/>
    <property type="match status" value="2"/>
</dbReference>
<dbReference type="HAMAP" id="MF_01024">
    <property type="entry name" value="HisD"/>
    <property type="match status" value="1"/>
</dbReference>
<dbReference type="InterPro" id="IPR016161">
    <property type="entry name" value="Ald_DH/histidinol_DH"/>
</dbReference>
<dbReference type="InterPro" id="IPR001692">
    <property type="entry name" value="Histidinol_DH_CS"/>
</dbReference>
<dbReference type="InterPro" id="IPR022695">
    <property type="entry name" value="Histidinol_DH_monofunct"/>
</dbReference>
<dbReference type="InterPro" id="IPR012131">
    <property type="entry name" value="Hstdl_DH"/>
</dbReference>
<dbReference type="NCBIfam" id="TIGR00069">
    <property type="entry name" value="hisD"/>
    <property type="match status" value="1"/>
</dbReference>
<dbReference type="PANTHER" id="PTHR21256:SF2">
    <property type="entry name" value="HISTIDINE BIOSYNTHESIS TRIFUNCTIONAL PROTEIN"/>
    <property type="match status" value="1"/>
</dbReference>
<dbReference type="PANTHER" id="PTHR21256">
    <property type="entry name" value="HISTIDINOL DEHYDROGENASE HDH"/>
    <property type="match status" value="1"/>
</dbReference>
<dbReference type="Pfam" id="PF00815">
    <property type="entry name" value="Histidinol_dh"/>
    <property type="match status" value="1"/>
</dbReference>
<dbReference type="PIRSF" id="PIRSF000099">
    <property type="entry name" value="Histidinol_dh"/>
    <property type="match status" value="1"/>
</dbReference>
<dbReference type="PRINTS" id="PR00083">
    <property type="entry name" value="HOLDHDRGNASE"/>
</dbReference>
<dbReference type="SUPFAM" id="SSF53720">
    <property type="entry name" value="ALDH-like"/>
    <property type="match status" value="1"/>
</dbReference>
<dbReference type="PROSITE" id="PS00611">
    <property type="entry name" value="HISOL_DEHYDROGENASE"/>
    <property type="match status" value="1"/>
</dbReference>
<keyword id="KW-0028">Amino-acid biosynthesis</keyword>
<keyword id="KW-0368">Histidine biosynthesis</keyword>
<keyword id="KW-0479">Metal-binding</keyword>
<keyword id="KW-0520">NAD</keyword>
<keyword id="KW-0560">Oxidoreductase</keyword>
<keyword id="KW-0862">Zinc</keyword>
<organism>
    <name type="scientific">Moorella thermoacetica (strain ATCC 39073 / JCM 9320)</name>
    <dbReference type="NCBI Taxonomy" id="264732"/>
    <lineage>
        <taxon>Bacteria</taxon>
        <taxon>Bacillati</taxon>
        <taxon>Bacillota</taxon>
        <taxon>Clostridia</taxon>
        <taxon>Moorellales</taxon>
        <taxon>Moorellaceae</taxon>
        <taxon>Moorella</taxon>
    </lineage>
</organism>
<comment type="function">
    <text evidence="1">Catalyzes the sequential NAD-dependent oxidations of L-histidinol to L-histidinaldehyde and then to L-histidine.</text>
</comment>
<comment type="catalytic activity">
    <reaction evidence="1">
        <text>L-histidinol + 2 NAD(+) + H2O = L-histidine + 2 NADH + 3 H(+)</text>
        <dbReference type="Rhea" id="RHEA:20641"/>
        <dbReference type="ChEBI" id="CHEBI:15377"/>
        <dbReference type="ChEBI" id="CHEBI:15378"/>
        <dbReference type="ChEBI" id="CHEBI:57540"/>
        <dbReference type="ChEBI" id="CHEBI:57595"/>
        <dbReference type="ChEBI" id="CHEBI:57699"/>
        <dbReference type="ChEBI" id="CHEBI:57945"/>
        <dbReference type="EC" id="1.1.1.23"/>
    </reaction>
</comment>
<comment type="cofactor">
    <cofactor evidence="1">
        <name>Zn(2+)</name>
        <dbReference type="ChEBI" id="CHEBI:29105"/>
    </cofactor>
    <text evidence="1">Binds 1 zinc ion per subunit.</text>
</comment>
<comment type="pathway">
    <text evidence="1">Amino-acid biosynthesis; L-histidine biosynthesis; L-histidine from 5-phospho-alpha-D-ribose 1-diphosphate: step 9/9.</text>
</comment>
<comment type="similarity">
    <text evidence="1">Belongs to the histidinol dehydrogenase family.</text>
</comment>
<reference key="1">
    <citation type="journal article" date="2008" name="Environ. Microbiol.">
        <title>The complete genome sequence of Moorella thermoacetica (f. Clostridium thermoaceticum).</title>
        <authorList>
            <person name="Pierce E."/>
            <person name="Xie G."/>
            <person name="Barabote R.D."/>
            <person name="Saunders E."/>
            <person name="Han C.S."/>
            <person name="Detter J.C."/>
            <person name="Richardson P."/>
            <person name="Brettin T.S."/>
            <person name="Das A."/>
            <person name="Ljungdahl L.G."/>
            <person name="Ragsdale S.W."/>
        </authorList>
    </citation>
    <scope>NUCLEOTIDE SEQUENCE [LARGE SCALE GENOMIC DNA]</scope>
    <source>
        <strain>ATCC 39073 / JCM 9320</strain>
    </source>
</reference>
<protein>
    <recommendedName>
        <fullName evidence="1">Histidinol dehydrogenase</fullName>
        <shortName evidence="1">HDH</shortName>
        <ecNumber evidence="1">1.1.1.23</ecNumber>
    </recommendedName>
</protein>
<name>HISX_MOOTA</name>
<evidence type="ECO:0000255" key="1">
    <source>
        <dbReference type="HAMAP-Rule" id="MF_01024"/>
    </source>
</evidence>